<comment type="subcellular location">
    <subcellularLocation>
        <location>Plastid</location>
        <location>Chloroplast</location>
    </subcellularLocation>
</comment>
<reference key="1">
    <citation type="journal article" date="1993" name="Nucleic Acids Res.">
        <title>Complete sequence of Euglena gracilis chloroplast DNA.</title>
        <authorList>
            <person name="Hallick R.B."/>
            <person name="Hong L."/>
            <person name="Drager R.G."/>
            <person name="Favreau M.R."/>
            <person name="Monfort A."/>
            <person name="Orsat B."/>
            <person name="Spielmann A."/>
            <person name="Stutz E."/>
        </authorList>
    </citation>
    <scope>NUCLEOTIDE SEQUENCE [LARGE SCALE GENOMIC DNA]</scope>
    <source>
        <strain>Z / UTEX 753</strain>
    </source>
</reference>
<reference key="2">
    <citation type="journal article" date="1995" name="RNA">
        <title>The Euglena gracilis intron-encoded mat2 locus is interrupted by three additional group II introns.</title>
        <authorList>
            <person name="Zhang L."/>
            <person name="Jenkins K.P."/>
            <person name="Stutz E."/>
            <person name="Hallick R.B."/>
        </authorList>
    </citation>
    <scope>NUCLEOTIDE SEQUENCE [GENOMIC DNA]</scope>
    <source>
        <strain>Z / UTEX 753</strain>
    </source>
</reference>
<accession>P31916</accession>
<accession>P31917</accession>
<accession>Q8SN99</accession>
<feature type="chain" id="PRO_0000217279" description="Maturase-like protein 2">
    <location>
        <begin position="1"/>
        <end position="758"/>
    </location>
</feature>
<organism>
    <name type="scientific">Euglena gracilis</name>
    <dbReference type="NCBI Taxonomy" id="3039"/>
    <lineage>
        <taxon>Eukaryota</taxon>
        <taxon>Discoba</taxon>
        <taxon>Euglenozoa</taxon>
        <taxon>Euglenida</taxon>
        <taxon>Spirocuta</taxon>
        <taxon>Euglenophyceae</taxon>
        <taxon>Euglenales</taxon>
        <taxon>Euglenaceae</taxon>
        <taxon>Euglena</taxon>
    </lineage>
</organism>
<proteinExistence type="predicted"/>
<dbReference type="EMBL" id="Z11874">
    <property type="status" value="NOT_ANNOTATED_CDS"/>
    <property type="molecule type" value="Genomic_DNA"/>
</dbReference>
<dbReference type="EMBL" id="X70810">
    <property type="protein sequence ID" value="CAC69146.1"/>
    <property type="molecule type" value="Genomic_DNA"/>
</dbReference>
<dbReference type="PIR" id="S34499">
    <property type="entry name" value="S34499"/>
</dbReference>
<dbReference type="PIR" id="S34500">
    <property type="entry name" value="S34500"/>
</dbReference>
<dbReference type="GO" id="GO:0009507">
    <property type="term" value="C:chloroplast"/>
    <property type="evidence" value="ECO:0007669"/>
    <property type="project" value="UniProtKB-SubCell"/>
</dbReference>
<dbReference type="GO" id="GO:0005739">
    <property type="term" value="C:mitochondrion"/>
    <property type="evidence" value="ECO:0007669"/>
    <property type="project" value="TreeGrafter"/>
</dbReference>
<dbReference type="GO" id="GO:0003964">
    <property type="term" value="F:RNA-directed DNA polymerase activity"/>
    <property type="evidence" value="ECO:0007669"/>
    <property type="project" value="TreeGrafter"/>
</dbReference>
<dbReference type="GO" id="GO:0006315">
    <property type="term" value="P:homing of group II introns"/>
    <property type="evidence" value="ECO:0007669"/>
    <property type="project" value="TreeGrafter"/>
</dbReference>
<dbReference type="GO" id="GO:0090615">
    <property type="term" value="P:mitochondrial mRNA processing"/>
    <property type="evidence" value="ECO:0007669"/>
    <property type="project" value="TreeGrafter"/>
</dbReference>
<dbReference type="PANTHER" id="PTHR33642">
    <property type="entry name" value="COX1/OXI3 INTRON 1 PROTEIN-RELATED"/>
    <property type="match status" value="1"/>
</dbReference>
<dbReference type="PANTHER" id="PTHR33642:SF3">
    <property type="entry name" value="NUCLEAR INTRON MATURASE 4, MITOCHONDRIAL"/>
    <property type="match status" value="1"/>
</dbReference>
<protein>
    <recommendedName>
        <fullName>Maturase-like protein 2</fullName>
    </recommendedName>
</protein>
<geneLocation type="chloroplast"/>
<keyword id="KW-0150">Chloroplast</keyword>
<keyword id="KW-0934">Plastid</keyword>
<name>MAT2_EUGGR</name>
<gene>
    <name type="primary">mat2</name>
</gene>
<sequence length="758" mass="93025">MYQSNLNLQKKVTSDLLYYSWLSLKCGWKYFFEIHNYCLFNSISRSWFKRTSSLIKKGFFIYPTVPLKIKNFFLSCTKKNFNLLKFKIVENAFLIIIKNFFIYKIYVQSMNLIECIFNVTSFSFMKPFFCKQCPNLLFSLTFFPFFKNDFLQKKKYFNSNKNFVKNFFSNEYFFSSSNSFFSIKFWDSQIKNFMTLKIIKLFDYVHKVRLKNIFSKFTYDSFFFVEIDKMFNLNLVNISSNLIYNSIENFGCSLLSSFFLNLYILEGDFFLDRFIFKICFKRNLFKTFFSFKKVSFFYQYSLKNFIPLRLEKNFFVSSFLKEVNSGKYHNIDIFYLFNNKVFTVYEKNIYYVRYLNFLIFGFLSSKNFIFFFKLKYLFFLRNKLYFNFREVQIFSSSNDKVIFLGVYIAYNKIYNFFEKLRVNKKYFLNVFQKIITKHNTFLKALKNIFHYSRCFNFFKKNCYPNFYKKKNFSFFNFYTESFRILKFFDAFFINTHHFFLPVELITSTKLVNFQKYTMYSFDFYNQKLSILLKDILENFNQFLSCSLVSIDLNLYNCLFEFKKHLVLLYNYYSPVYSFFSKRQRYKLNFNSFNYYSFSNFSGQNRSFFSSKANQFRFFKFFVPFKVFLKKLRLLGFIHPFKFRPIGNVRLLLFEDKFILRNFGFFVYSVLNWFSICENFSHLRFFVELIRESCFLTLCRKHNKMKLWSYSVYTFDLVFSKSVYRTISFFPTRKFIFNLKRKSFLVDVRFNLDETIFLE</sequence>